<keyword id="KW-1185">Reference proteome</keyword>
<keyword id="KW-0687">Ribonucleoprotein</keyword>
<keyword id="KW-0689">Ribosomal protein</keyword>
<dbReference type="EMBL" id="AC007109">
    <property type="protein sequence ID" value="AAD25645.1"/>
    <property type="molecule type" value="Genomic_DNA"/>
</dbReference>
<dbReference type="EMBL" id="CP002685">
    <property type="protein sequence ID" value="AEC07009.1"/>
    <property type="molecule type" value="Genomic_DNA"/>
</dbReference>
<dbReference type="EMBL" id="AY065368">
    <property type="protein sequence ID" value="AAL38809.1"/>
    <property type="molecule type" value="mRNA"/>
</dbReference>
<dbReference type="EMBL" id="AY096618">
    <property type="protein sequence ID" value="AAM20268.1"/>
    <property type="molecule type" value="mRNA"/>
</dbReference>
<dbReference type="EMBL" id="AY085447">
    <property type="protein sequence ID" value="AAM62673.1"/>
    <property type="molecule type" value="mRNA"/>
</dbReference>
<dbReference type="PIR" id="D84589">
    <property type="entry name" value="D84589"/>
</dbReference>
<dbReference type="RefSeq" id="NP_179635.1">
    <property type="nucleotide sequence ID" value="NM_127604.4"/>
</dbReference>
<dbReference type="SMR" id="Q9SIM4"/>
<dbReference type="BioGRID" id="1917">
    <property type="interactions" value="72"/>
</dbReference>
<dbReference type="FunCoup" id="Q9SIM4">
    <property type="interactions" value="3346"/>
</dbReference>
<dbReference type="IntAct" id="Q9SIM4">
    <property type="interactions" value="2"/>
</dbReference>
<dbReference type="STRING" id="3702.Q9SIM4"/>
<dbReference type="PaxDb" id="3702-AT2G20450.1"/>
<dbReference type="ProteomicsDB" id="225993"/>
<dbReference type="EnsemblPlants" id="AT2G20450.1">
    <property type="protein sequence ID" value="AT2G20450.1"/>
    <property type="gene ID" value="AT2G20450"/>
</dbReference>
<dbReference type="GeneID" id="816564"/>
<dbReference type="Gramene" id="AT2G20450.1">
    <property type="protein sequence ID" value="AT2G20450.1"/>
    <property type="gene ID" value="AT2G20450"/>
</dbReference>
<dbReference type="KEGG" id="ath:AT2G20450"/>
<dbReference type="Araport" id="AT2G20450"/>
<dbReference type="TAIR" id="AT2G20450"/>
<dbReference type="eggNOG" id="KOG3421">
    <property type="taxonomic scope" value="Eukaryota"/>
</dbReference>
<dbReference type="HOGENOM" id="CLU_082438_2_1_1"/>
<dbReference type="InParanoid" id="Q9SIM4"/>
<dbReference type="OMA" id="ANWRFVE"/>
<dbReference type="OrthoDB" id="1875589at2759"/>
<dbReference type="PhylomeDB" id="Q9SIM4"/>
<dbReference type="CD-CODE" id="4299E36E">
    <property type="entry name" value="Nucleolus"/>
</dbReference>
<dbReference type="PRO" id="PR:Q9SIM4"/>
<dbReference type="Proteomes" id="UP000006548">
    <property type="component" value="Chromosome 2"/>
</dbReference>
<dbReference type="ExpressionAtlas" id="Q9SIM4">
    <property type="expression patterns" value="baseline and differential"/>
</dbReference>
<dbReference type="GO" id="GO:0022625">
    <property type="term" value="C:cytosolic large ribosomal subunit"/>
    <property type="evidence" value="ECO:0007005"/>
    <property type="project" value="TAIR"/>
</dbReference>
<dbReference type="GO" id="GO:0005783">
    <property type="term" value="C:endoplasmic reticulum"/>
    <property type="evidence" value="ECO:0007005"/>
    <property type="project" value="TAIR"/>
</dbReference>
<dbReference type="GO" id="GO:0005739">
    <property type="term" value="C:mitochondrion"/>
    <property type="evidence" value="ECO:0007005"/>
    <property type="project" value="TAIR"/>
</dbReference>
<dbReference type="GO" id="GO:0009506">
    <property type="term" value="C:plasmodesma"/>
    <property type="evidence" value="ECO:0007005"/>
    <property type="project" value="TAIR"/>
</dbReference>
<dbReference type="GO" id="GO:0005773">
    <property type="term" value="C:vacuole"/>
    <property type="evidence" value="ECO:0007005"/>
    <property type="project" value="TAIR"/>
</dbReference>
<dbReference type="GO" id="GO:0003729">
    <property type="term" value="F:mRNA binding"/>
    <property type="evidence" value="ECO:0000314"/>
    <property type="project" value="TAIR"/>
</dbReference>
<dbReference type="GO" id="GO:0003735">
    <property type="term" value="F:structural constituent of ribosome"/>
    <property type="evidence" value="ECO:0000314"/>
    <property type="project" value="CAFA"/>
</dbReference>
<dbReference type="GO" id="GO:0006412">
    <property type="term" value="P:translation"/>
    <property type="evidence" value="ECO:0007669"/>
    <property type="project" value="InterPro"/>
</dbReference>
<dbReference type="CDD" id="cd23702">
    <property type="entry name" value="eL14"/>
    <property type="match status" value="1"/>
</dbReference>
<dbReference type="FunFam" id="2.30.30.30:FF:000026">
    <property type="entry name" value="60S ribosomal protein L14-1"/>
    <property type="match status" value="1"/>
</dbReference>
<dbReference type="Gene3D" id="2.30.30.30">
    <property type="match status" value="1"/>
</dbReference>
<dbReference type="Gene3D" id="6.10.250.2270">
    <property type="match status" value="1"/>
</dbReference>
<dbReference type="InterPro" id="IPR014722">
    <property type="entry name" value="Rib_uL2_dom2"/>
</dbReference>
<dbReference type="InterPro" id="IPR039660">
    <property type="entry name" value="Ribosomal_eL14"/>
</dbReference>
<dbReference type="InterPro" id="IPR002784">
    <property type="entry name" value="Ribosomal_eL14_dom"/>
</dbReference>
<dbReference type="InterPro" id="IPR008991">
    <property type="entry name" value="Translation_prot_SH3-like_sf"/>
</dbReference>
<dbReference type="PANTHER" id="PTHR11127">
    <property type="entry name" value="60S RIBOSOMAL PROTEIN L14"/>
    <property type="match status" value="1"/>
</dbReference>
<dbReference type="PANTHER" id="PTHR11127:SF2">
    <property type="entry name" value="LARGE RIBOSOMAL SUBUNIT PROTEIN EL14"/>
    <property type="match status" value="1"/>
</dbReference>
<dbReference type="Pfam" id="PF01929">
    <property type="entry name" value="Ribosomal_L14e"/>
    <property type="match status" value="1"/>
</dbReference>
<dbReference type="SUPFAM" id="SSF50104">
    <property type="entry name" value="Translation proteins SH3-like domain"/>
    <property type="match status" value="1"/>
</dbReference>
<feature type="chain" id="PRO_0000240516" description="Large ribosomal subunit protein eL14z">
    <location>
        <begin position="1"/>
        <end position="134"/>
    </location>
</feature>
<protein>
    <recommendedName>
        <fullName evidence="1">Large ribosomal subunit protein eL14z</fullName>
    </recommendedName>
    <alternativeName>
        <fullName>60S ribosomal protein L14-1</fullName>
    </alternativeName>
</protein>
<accession>Q9SIM4</accession>
<name>RL141_ARATH</name>
<organism>
    <name type="scientific">Arabidopsis thaliana</name>
    <name type="common">Mouse-ear cress</name>
    <dbReference type="NCBI Taxonomy" id="3702"/>
    <lineage>
        <taxon>Eukaryota</taxon>
        <taxon>Viridiplantae</taxon>
        <taxon>Streptophyta</taxon>
        <taxon>Embryophyta</taxon>
        <taxon>Tracheophyta</taxon>
        <taxon>Spermatophyta</taxon>
        <taxon>Magnoliopsida</taxon>
        <taxon>eudicotyledons</taxon>
        <taxon>Gunneridae</taxon>
        <taxon>Pentapetalae</taxon>
        <taxon>rosids</taxon>
        <taxon>malvids</taxon>
        <taxon>Brassicales</taxon>
        <taxon>Brassicaceae</taxon>
        <taxon>Camelineae</taxon>
        <taxon>Arabidopsis</taxon>
    </lineage>
</organism>
<evidence type="ECO:0000303" key="1">
    <source>
    </source>
</evidence>
<evidence type="ECO:0000305" key="2"/>
<proteinExistence type="evidence at transcript level"/>
<gene>
    <name type="primary">RPL14A</name>
    <name type="ordered locus">At2g20450</name>
    <name type="ORF">T13C7.4</name>
</gene>
<reference key="1">
    <citation type="journal article" date="1999" name="Nature">
        <title>Sequence and analysis of chromosome 2 of the plant Arabidopsis thaliana.</title>
        <authorList>
            <person name="Lin X."/>
            <person name="Kaul S."/>
            <person name="Rounsley S.D."/>
            <person name="Shea T.P."/>
            <person name="Benito M.-I."/>
            <person name="Town C.D."/>
            <person name="Fujii C.Y."/>
            <person name="Mason T.M."/>
            <person name="Bowman C.L."/>
            <person name="Barnstead M.E."/>
            <person name="Feldblyum T.V."/>
            <person name="Buell C.R."/>
            <person name="Ketchum K.A."/>
            <person name="Lee J.J."/>
            <person name="Ronning C.M."/>
            <person name="Koo H.L."/>
            <person name="Moffat K.S."/>
            <person name="Cronin L.A."/>
            <person name="Shen M."/>
            <person name="Pai G."/>
            <person name="Van Aken S."/>
            <person name="Umayam L."/>
            <person name="Tallon L.J."/>
            <person name="Gill J.E."/>
            <person name="Adams M.D."/>
            <person name="Carrera A.J."/>
            <person name="Creasy T.H."/>
            <person name="Goodman H.M."/>
            <person name="Somerville C.R."/>
            <person name="Copenhaver G.P."/>
            <person name="Preuss D."/>
            <person name="Nierman W.C."/>
            <person name="White O."/>
            <person name="Eisen J.A."/>
            <person name="Salzberg S.L."/>
            <person name="Fraser C.M."/>
            <person name="Venter J.C."/>
        </authorList>
    </citation>
    <scope>NUCLEOTIDE SEQUENCE [LARGE SCALE GENOMIC DNA]</scope>
    <source>
        <strain>cv. Columbia</strain>
    </source>
</reference>
<reference key="2">
    <citation type="journal article" date="2017" name="Plant J.">
        <title>Araport11: a complete reannotation of the Arabidopsis thaliana reference genome.</title>
        <authorList>
            <person name="Cheng C.Y."/>
            <person name="Krishnakumar V."/>
            <person name="Chan A.P."/>
            <person name="Thibaud-Nissen F."/>
            <person name="Schobel S."/>
            <person name="Town C.D."/>
        </authorList>
    </citation>
    <scope>GENOME REANNOTATION</scope>
    <source>
        <strain>cv. Columbia</strain>
    </source>
</reference>
<reference key="3">
    <citation type="journal article" date="2003" name="Science">
        <title>Empirical analysis of transcriptional activity in the Arabidopsis genome.</title>
        <authorList>
            <person name="Yamada K."/>
            <person name="Lim J."/>
            <person name="Dale J.M."/>
            <person name="Chen H."/>
            <person name="Shinn P."/>
            <person name="Palm C.J."/>
            <person name="Southwick A.M."/>
            <person name="Wu H.C."/>
            <person name="Kim C.J."/>
            <person name="Nguyen M."/>
            <person name="Pham P.K."/>
            <person name="Cheuk R.F."/>
            <person name="Karlin-Newmann G."/>
            <person name="Liu S.X."/>
            <person name="Lam B."/>
            <person name="Sakano H."/>
            <person name="Wu T."/>
            <person name="Yu G."/>
            <person name="Miranda M."/>
            <person name="Quach H.L."/>
            <person name="Tripp M."/>
            <person name="Chang C.H."/>
            <person name="Lee J.M."/>
            <person name="Toriumi M.J."/>
            <person name="Chan M.M."/>
            <person name="Tang C.C."/>
            <person name="Onodera C.S."/>
            <person name="Deng J.M."/>
            <person name="Akiyama K."/>
            <person name="Ansari Y."/>
            <person name="Arakawa T."/>
            <person name="Banh J."/>
            <person name="Banno F."/>
            <person name="Bowser L."/>
            <person name="Brooks S.Y."/>
            <person name="Carninci P."/>
            <person name="Chao Q."/>
            <person name="Choy N."/>
            <person name="Enju A."/>
            <person name="Goldsmith A.D."/>
            <person name="Gurjal M."/>
            <person name="Hansen N.F."/>
            <person name="Hayashizaki Y."/>
            <person name="Johnson-Hopson C."/>
            <person name="Hsuan V.W."/>
            <person name="Iida K."/>
            <person name="Karnes M."/>
            <person name="Khan S."/>
            <person name="Koesema E."/>
            <person name="Ishida J."/>
            <person name="Jiang P.X."/>
            <person name="Jones T."/>
            <person name="Kawai J."/>
            <person name="Kamiya A."/>
            <person name="Meyers C."/>
            <person name="Nakajima M."/>
            <person name="Narusaka M."/>
            <person name="Seki M."/>
            <person name="Sakurai T."/>
            <person name="Satou M."/>
            <person name="Tamse R."/>
            <person name="Vaysberg M."/>
            <person name="Wallender E.K."/>
            <person name="Wong C."/>
            <person name="Yamamura Y."/>
            <person name="Yuan S."/>
            <person name="Shinozaki K."/>
            <person name="Davis R.W."/>
            <person name="Theologis A."/>
            <person name="Ecker J.R."/>
        </authorList>
    </citation>
    <scope>NUCLEOTIDE SEQUENCE [LARGE SCALE MRNA]</scope>
    <source>
        <strain>cv. Columbia</strain>
    </source>
</reference>
<reference key="4">
    <citation type="submission" date="2002-03" db="EMBL/GenBank/DDBJ databases">
        <title>Full-length cDNA from Arabidopsis thaliana.</title>
        <authorList>
            <person name="Brover V.V."/>
            <person name="Troukhan M.E."/>
            <person name="Alexandrov N.A."/>
            <person name="Lu Y.-P."/>
            <person name="Flavell R.B."/>
            <person name="Feldmann K.A."/>
        </authorList>
    </citation>
    <scope>NUCLEOTIDE SEQUENCE [LARGE SCALE MRNA]</scope>
</reference>
<reference key="5">
    <citation type="journal article" date="2001" name="Plant Physiol.">
        <title>The organization of cytoplasmic ribosomal protein genes in the Arabidopsis genome.</title>
        <authorList>
            <person name="Barakat A."/>
            <person name="Szick-Miranda K."/>
            <person name="Chang I.-F."/>
            <person name="Guyot R."/>
            <person name="Blanc G."/>
            <person name="Cooke R."/>
            <person name="Delseny M."/>
            <person name="Bailey-Serres J."/>
        </authorList>
    </citation>
    <scope>GENE FAMILY ORGANIZATION</scope>
    <scope>NOMENCLATURE</scope>
</reference>
<reference key="6">
    <citation type="journal article" date="2023" name="Plant Cell">
        <title>An updated nomenclature for plant ribosomal protein genes.</title>
        <authorList>
            <person name="Scarpin M.R."/>
            <person name="Busche M."/>
            <person name="Martinez R.E."/>
            <person name="Harper L.C."/>
            <person name="Reiser L."/>
            <person name="Szakonyi D."/>
            <person name="Merchante C."/>
            <person name="Lan T."/>
            <person name="Xiong W."/>
            <person name="Mo B."/>
            <person name="Tang G."/>
            <person name="Chen X."/>
            <person name="Bailey-Serres J."/>
            <person name="Browning K.S."/>
            <person name="Brunkard J.O."/>
        </authorList>
    </citation>
    <scope>NOMENCLATURE</scope>
</reference>
<comment type="similarity">
    <text evidence="2">Belongs to the eukaryotic ribosomal protein eL14 family.</text>
</comment>
<sequence>MGFKRFVEIGRVALVNYGEDYGKLVVIVDVVDQNRALVDAPDMERIQMNLKRLSLTDIVIDINRVPKKKVLIEAMEKADVKNKWEKSSWGRKLIVQKRRAALNDFDRFKIMLAKIKRAGIVRQELAKLKREIAA</sequence>